<dbReference type="EMBL" id="CP000009">
    <property type="protein sequence ID" value="AAW61421.1"/>
    <property type="molecule type" value="Genomic_DNA"/>
</dbReference>
<dbReference type="RefSeq" id="WP_011253203.1">
    <property type="nucleotide sequence ID" value="NC_006677.1"/>
</dbReference>
<dbReference type="SMR" id="Q5FQC5"/>
<dbReference type="STRING" id="290633.GOX1681"/>
<dbReference type="KEGG" id="gox:GOX1681"/>
<dbReference type="eggNOG" id="COG0632">
    <property type="taxonomic scope" value="Bacteria"/>
</dbReference>
<dbReference type="HOGENOM" id="CLU_087936_3_0_5"/>
<dbReference type="Proteomes" id="UP000006375">
    <property type="component" value="Chromosome"/>
</dbReference>
<dbReference type="GO" id="GO:0005737">
    <property type="term" value="C:cytoplasm"/>
    <property type="evidence" value="ECO:0007669"/>
    <property type="project" value="UniProtKB-SubCell"/>
</dbReference>
<dbReference type="GO" id="GO:0009379">
    <property type="term" value="C:Holliday junction helicase complex"/>
    <property type="evidence" value="ECO:0007669"/>
    <property type="project" value="InterPro"/>
</dbReference>
<dbReference type="GO" id="GO:0048476">
    <property type="term" value="C:Holliday junction resolvase complex"/>
    <property type="evidence" value="ECO:0007669"/>
    <property type="project" value="UniProtKB-UniRule"/>
</dbReference>
<dbReference type="GO" id="GO:0005524">
    <property type="term" value="F:ATP binding"/>
    <property type="evidence" value="ECO:0007669"/>
    <property type="project" value="InterPro"/>
</dbReference>
<dbReference type="GO" id="GO:0000400">
    <property type="term" value="F:four-way junction DNA binding"/>
    <property type="evidence" value="ECO:0007669"/>
    <property type="project" value="UniProtKB-UniRule"/>
</dbReference>
<dbReference type="GO" id="GO:0009378">
    <property type="term" value="F:four-way junction helicase activity"/>
    <property type="evidence" value="ECO:0007669"/>
    <property type="project" value="InterPro"/>
</dbReference>
<dbReference type="GO" id="GO:0006310">
    <property type="term" value="P:DNA recombination"/>
    <property type="evidence" value="ECO:0007669"/>
    <property type="project" value="UniProtKB-UniRule"/>
</dbReference>
<dbReference type="GO" id="GO:0006281">
    <property type="term" value="P:DNA repair"/>
    <property type="evidence" value="ECO:0007669"/>
    <property type="project" value="UniProtKB-UniRule"/>
</dbReference>
<dbReference type="CDD" id="cd14332">
    <property type="entry name" value="UBA_RuvA_C"/>
    <property type="match status" value="1"/>
</dbReference>
<dbReference type="Gene3D" id="1.10.150.20">
    <property type="entry name" value="5' to 3' exonuclease, C-terminal subdomain"/>
    <property type="match status" value="1"/>
</dbReference>
<dbReference type="Gene3D" id="1.10.8.10">
    <property type="entry name" value="DNA helicase RuvA subunit, C-terminal domain"/>
    <property type="match status" value="1"/>
</dbReference>
<dbReference type="Gene3D" id="2.40.50.140">
    <property type="entry name" value="Nucleic acid-binding proteins"/>
    <property type="match status" value="1"/>
</dbReference>
<dbReference type="HAMAP" id="MF_00031">
    <property type="entry name" value="DNA_HJ_migration_RuvA"/>
    <property type="match status" value="1"/>
</dbReference>
<dbReference type="InterPro" id="IPR013849">
    <property type="entry name" value="DNA_helicase_Holl-junc_RuvA_I"/>
</dbReference>
<dbReference type="InterPro" id="IPR003583">
    <property type="entry name" value="Hlx-hairpin-Hlx_DNA-bd_motif"/>
</dbReference>
<dbReference type="InterPro" id="IPR012340">
    <property type="entry name" value="NA-bd_OB-fold"/>
</dbReference>
<dbReference type="InterPro" id="IPR000085">
    <property type="entry name" value="RuvA"/>
</dbReference>
<dbReference type="InterPro" id="IPR010994">
    <property type="entry name" value="RuvA_2-like"/>
</dbReference>
<dbReference type="InterPro" id="IPR011114">
    <property type="entry name" value="RuvA_C"/>
</dbReference>
<dbReference type="InterPro" id="IPR036267">
    <property type="entry name" value="RuvA_C_sf"/>
</dbReference>
<dbReference type="NCBIfam" id="TIGR00084">
    <property type="entry name" value="ruvA"/>
    <property type="match status" value="1"/>
</dbReference>
<dbReference type="Pfam" id="PF14520">
    <property type="entry name" value="HHH_5"/>
    <property type="match status" value="1"/>
</dbReference>
<dbReference type="Pfam" id="PF07499">
    <property type="entry name" value="RuvA_C"/>
    <property type="match status" value="1"/>
</dbReference>
<dbReference type="Pfam" id="PF01330">
    <property type="entry name" value="RuvA_N"/>
    <property type="match status" value="1"/>
</dbReference>
<dbReference type="SMART" id="SM00278">
    <property type="entry name" value="HhH1"/>
    <property type="match status" value="2"/>
</dbReference>
<dbReference type="SUPFAM" id="SSF46929">
    <property type="entry name" value="DNA helicase RuvA subunit, C-terminal domain"/>
    <property type="match status" value="1"/>
</dbReference>
<dbReference type="SUPFAM" id="SSF50249">
    <property type="entry name" value="Nucleic acid-binding proteins"/>
    <property type="match status" value="1"/>
</dbReference>
<dbReference type="SUPFAM" id="SSF47781">
    <property type="entry name" value="RuvA domain 2-like"/>
    <property type="match status" value="1"/>
</dbReference>
<keyword id="KW-0963">Cytoplasm</keyword>
<keyword id="KW-0227">DNA damage</keyword>
<keyword id="KW-0233">DNA recombination</keyword>
<keyword id="KW-0234">DNA repair</keyword>
<keyword id="KW-0238">DNA-binding</keyword>
<keyword id="KW-1185">Reference proteome</keyword>
<comment type="function">
    <text evidence="1">The RuvA-RuvB-RuvC complex processes Holliday junction (HJ) DNA during genetic recombination and DNA repair, while the RuvA-RuvB complex plays an important role in the rescue of blocked DNA replication forks via replication fork reversal (RFR). RuvA specifically binds to HJ cruciform DNA, conferring on it an open structure. The RuvB hexamer acts as an ATP-dependent pump, pulling dsDNA into and through the RuvAB complex. HJ branch migration allows RuvC to scan DNA until it finds its consensus sequence, where it cleaves and resolves the cruciform DNA.</text>
</comment>
<comment type="subunit">
    <text evidence="1">Homotetramer. Forms an RuvA(8)-RuvB(12)-Holliday junction (HJ) complex. HJ DNA is sandwiched between 2 RuvA tetramers; dsDNA enters through RuvA and exits via RuvB. An RuvB hexamer assembles on each DNA strand where it exits the tetramer. Each RuvB hexamer is contacted by two RuvA subunits (via domain III) on 2 adjacent RuvB subunits; this complex drives branch migration. In the full resolvosome a probable DNA-RuvA(4)-RuvB(12)-RuvC(2) complex forms which resolves the HJ.</text>
</comment>
<comment type="subcellular location">
    <subcellularLocation>
        <location evidence="1">Cytoplasm</location>
    </subcellularLocation>
</comment>
<comment type="domain">
    <text evidence="1">Has three domains with a flexible linker between the domains II and III and assumes an 'L' shape. Domain III is highly mobile and contacts RuvB.</text>
</comment>
<comment type="similarity">
    <text evidence="1">Belongs to the RuvA family.</text>
</comment>
<proteinExistence type="inferred from homology"/>
<organism>
    <name type="scientific">Gluconobacter oxydans (strain 621H)</name>
    <name type="common">Gluconobacter suboxydans</name>
    <dbReference type="NCBI Taxonomy" id="290633"/>
    <lineage>
        <taxon>Bacteria</taxon>
        <taxon>Pseudomonadati</taxon>
        <taxon>Pseudomonadota</taxon>
        <taxon>Alphaproteobacteria</taxon>
        <taxon>Acetobacterales</taxon>
        <taxon>Acetobacteraceae</taxon>
        <taxon>Gluconobacter</taxon>
    </lineage>
</organism>
<reference key="1">
    <citation type="journal article" date="2005" name="Nat. Biotechnol.">
        <title>Complete genome sequence of the acetic acid bacterium Gluconobacter oxydans.</title>
        <authorList>
            <person name="Prust C."/>
            <person name="Hoffmeister M."/>
            <person name="Liesegang H."/>
            <person name="Wiezer A."/>
            <person name="Fricke W.F."/>
            <person name="Ehrenreich A."/>
            <person name="Gottschalk G."/>
            <person name="Deppenmeier U."/>
        </authorList>
    </citation>
    <scope>NUCLEOTIDE SEQUENCE [LARGE SCALE GENOMIC DNA]</scope>
    <source>
        <strain>621H</strain>
    </source>
</reference>
<feature type="chain" id="PRO_0000224872" description="Holliday junction branch migration complex subunit RuvA">
    <location>
        <begin position="1"/>
        <end position="200"/>
    </location>
</feature>
<feature type="region of interest" description="Domain I" evidence="1">
    <location>
        <begin position="1"/>
        <end position="64"/>
    </location>
</feature>
<feature type="region of interest" description="Domain II" evidence="1">
    <location>
        <begin position="65"/>
        <end position="143"/>
    </location>
</feature>
<feature type="region of interest" description="Flexible linker" evidence="1">
    <location>
        <begin position="144"/>
        <end position="148"/>
    </location>
</feature>
<feature type="region of interest" description="Domain III" evidence="1">
    <location>
        <begin position="149"/>
        <end position="200"/>
    </location>
</feature>
<name>RUVA_GLUOX</name>
<protein>
    <recommendedName>
        <fullName evidence="1">Holliday junction branch migration complex subunit RuvA</fullName>
    </recommendedName>
</protein>
<gene>
    <name evidence="1" type="primary">ruvA</name>
    <name type="ordered locus">GOX1681</name>
</gene>
<sequence length="200" mass="20875">MIGQLTGLVGQIEGERCIVDVNGVGYVVSASTRTLAVLPQPPSVARVLIETIVREDAIQLFGFATTDERDWFRLLTTVQSVGAKVALAILSANNPGELLLAINAGDKGSLTRAAGVGPRLADRILSELRNKVAKMPGGGGTVSAPGIVSGPSVENDALLALAGLGFRRAEAWPVLSKVLAENENATLDLAIRLSLKDLAR</sequence>
<accession>Q5FQC5</accession>
<evidence type="ECO:0000255" key="1">
    <source>
        <dbReference type="HAMAP-Rule" id="MF_00031"/>
    </source>
</evidence>